<evidence type="ECO:0000255" key="1">
    <source>
        <dbReference type="HAMAP-Rule" id="MF_01961"/>
    </source>
</evidence>
<evidence type="ECO:0000256" key="2">
    <source>
        <dbReference type="SAM" id="MobiDB-lite"/>
    </source>
</evidence>
<comment type="function">
    <text evidence="1">Bifunctional enzyme with both catalase and broad-spectrum peroxidase activity.</text>
</comment>
<comment type="catalytic activity">
    <reaction evidence="1">
        <text>H2O2 + AH2 = A + 2 H2O</text>
        <dbReference type="Rhea" id="RHEA:30275"/>
        <dbReference type="ChEBI" id="CHEBI:13193"/>
        <dbReference type="ChEBI" id="CHEBI:15377"/>
        <dbReference type="ChEBI" id="CHEBI:16240"/>
        <dbReference type="ChEBI" id="CHEBI:17499"/>
        <dbReference type="EC" id="1.11.1.21"/>
    </reaction>
</comment>
<comment type="catalytic activity">
    <reaction evidence="1">
        <text>2 H2O2 = O2 + 2 H2O</text>
        <dbReference type="Rhea" id="RHEA:20309"/>
        <dbReference type="ChEBI" id="CHEBI:15377"/>
        <dbReference type="ChEBI" id="CHEBI:15379"/>
        <dbReference type="ChEBI" id="CHEBI:16240"/>
        <dbReference type="EC" id="1.11.1.21"/>
    </reaction>
</comment>
<comment type="cofactor">
    <cofactor evidence="1">
        <name>heme b</name>
        <dbReference type="ChEBI" id="CHEBI:60344"/>
    </cofactor>
    <text evidence="1">Binds 1 heme b (iron(II)-protoporphyrin IX) group per dimer.</text>
</comment>
<comment type="subunit">
    <text evidence="1">Homodimer or homotetramer.</text>
</comment>
<comment type="PTM">
    <text evidence="1">Formation of the three residue Trp-Tyr-Met cross-link is important for the catalase, but not the peroxidase activity of the enzyme.</text>
</comment>
<comment type="similarity">
    <text evidence="1">Belongs to the peroxidase family. Peroxidase/catalase subfamily.</text>
</comment>
<sequence length="735" mass="80964">MSDSKCPVTGKSSRQVAGGGTSNRDWWPNQLNLQILHQQSTKSNPMGEGFNYRQEFTMLDLAAVKKDLVALMTDSQDWWPADWGHYGGLMIRMAWHSAGTYRMGDGRGGAGSGSQRLAPLNSWPDNVNLDKARRLLWPVKQKYGRKISWADLMILAGNCALESMGFKTFGFGGGREDIWEPQEDVYWGGEKEWLATSDKPYSRYSGERDLDNPLAAVQMGLIYINPEGPDGNPDPVASGRDVRETFARMAMNDEETVALVAGGHTFGKCHGAGTADHVGPEPEAAPLEAQGLGWISSYKSGKGGDTISSGIEGAWKPNPTTWDMGYLKVLFKYEWELVKSPAGAHQWLAKDVADEDMVVDAHDPAKKRRPMMTTADLSLRFDPAYEKIARRYLANPDEFADAFARAWFKLTHRDMGPRSRYLGPEVPAEELIWQDPVPAATHELINNSDVADLKVTILATGLSISQLVTTAWASASTFRGSDKRGGANGARIRLAPQKDWEVNQPGQLAKVLETLAAVQQEFNAAQSGNKRVSLADLIVLGGCAAVEQAARNAGQTVAVPFTPGRTDASQEQTDTASFEVLEPKADGFRNYQKEKYAVSAEELLVDRAQLLTLTAPEMTVLIGGMRVLNANFGNARHGVFTKRPEALTNDFFVNLLDMATIWKATSEDQDLFEGRDRTSGELKWTATRVDLIFGSNSQLRAIAEVYGCEDSQEKFLQDFAAAWDKVMQADRFELV</sequence>
<feature type="chain" id="PRO_0000354801" description="Catalase-peroxidase">
    <location>
        <begin position="1"/>
        <end position="735"/>
    </location>
</feature>
<feature type="region of interest" description="Disordered" evidence="2">
    <location>
        <begin position="1"/>
        <end position="25"/>
    </location>
</feature>
<feature type="active site" description="Proton acceptor" evidence="1">
    <location>
        <position position="96"/>
    </location>
</feature>
<feature type="binding site" description="axial binding residue" evidence="1">
    <location>
        <position position="264"/>
    </location>
    <ligand>
        <name>heme b</name>
        <dbReference type="ChEBI" id="CHEBI:60344"/>
    </ligand>
    <ligandPart>
        <name>Fe</name>
        <dbReference type="ChEBI" id="CHEBI:18248"/>
    </ligandPart>
</feature>
<feature type="site" description="Transition state stabilizer" evidence="1">
    <location>
        <position position="92"/>
    </location>
</feature>
<feature type="cross-link" description="Tryptophyl-tyrosyl-methioninium (Trp-Tyr) (with M-249)" evidence="1">
    <location>
        <begin position="95"/>
        <end position="223"/>
    </location>
</feature>
<feature type="cross-link" description="Tryptophyl-tyrosyl-methioninium (Tyr-Met) (with W-95)" evidence="1">
    <location>
        <begin position="223"/>
        <end position="249"/>
    </location>
</feature>
<dbReference type="EC" id="1.11.1.21" evidence="1"/>
<dbReference type="EMBL" id="CP001089">
    <property type="protein sequence ID" value="ACD95511.1"/>
    <property type="molecule type" value="Genomic_DNA"/>
</dbReference>
<dbReference type="RefSeq" id="WP_012469850.1">
    <property type="nucleotide sequence ID" value="NC_010814.1"/>
</dbReference>
<dbReference type="SMR" id="B3EBB7"/>
<dbReference type="STRING" id="398767.Glov_1795"/>
<dbReference type="KEGG" id="glo:Glov_1795"/>
<dbReference type="eggNOG" id="COG0376">
    <property type="taxonomic scope" value="Bacteria"/>
</dbReference>
<dbReference type="HOGENOM" id="CLU_025424_2_0_7"/>
<dbReference type="OrthoDB" id="9759743at2"/>
<dbReference type="Proteomes" id="UP000002420">
    <property type="component" value="Chromosome"/>
</dbReference>
<dbReference type="GO" id="GO:0005829">
    <property type="term" value="C:cytosol"/>
    <property type="evidence" value="ECO:0007669"/>
    <property type="project" value="TreeGrafter"/>
</dbReference>
<dbReference type="GO" id="GO:0004096">
    <property type="term" value="F:catalase activity"/>
    <property type="evidence" value="ECO:0007669"/>
    <property type="project" value="UniProtKB-UniRule"/>
</dbReference>
<dbReference type="GO" id="GO:0020037">
    <property type="term" value="F:heme binding"/>
    <property type="evidence" value="ECO:0007669"/>
    <property type="project" value="InterPro"/>
</dbReference>
<dbReference type="GO" id="GO:0046872">
    <property type="term" value="F:metal ion binding"/>
    <property type="evidence" value="ECO:0007669"/>
    <property type="project" value="UniProtKB-KW"/>
</dbReference>
<dbReference type="GO" id="GO:0070301">
    <property type="term" value="P:cellular response to hydrogen peroxide"/>
    <property type="evidence" value="ECO:0007669"/>
    <property type="project" value="TreeGrafter"/>
</dbReference>
<dbReference type="GO" id="GO:0042744">
    <property type="term" value="P:hydrogen peroxide catabolic process"/>
    <property type="evidence" value="ECO:0007669"/>
    <property type="project" value="UniProtKB-KW"/>
</dbReference>
<dbReference type="CDD" id="cd00649">
    <property type="entry name" value="catalase_peroxidase_1"/>
    <property type="match status" value="1"/>
</dbReference>
<dbReference type="CDD" id="cd08200">
    <property type="entry name" value="catalase_peroxidase_2"/>
    <property type="match status" value="1"/>
</dbReference>
<dbReference type="FunFam" id="1.10.420.10:FF:000002">
    <property type="entry name" value="Catalase-peroxidase"/>
    <property type="match status" value="1"/>
</dbReference>
<dbReference type="FunFam" id="1.10.420.10:FF:000004">
    <property type="entry name" value="Catalase-peroxidase"/>
    <property type="match status" value="1"/>
</dbReference>
<dbReference type="FunFam" id="1.10.520.10:FF:000002">
    <property type="entry name" value="Catalase-peroxidase"/>
    <property type="match status" value="1"/>
</dbReference>
<dbReference type="FunFam" id="1.10.520.10:FF:000004">
    <property type="entry name" value="Catalase-peroxidase"/>
    <property type="match status" value="1"/>
</dbReference>
<dbReference type="Gene3D" id="1.10.520.10">
    <property type="match status" value="2"/>
</dbReference>
<dbReference type="Gene3D" id="1.10.420.10">
    <property type="entry name" value="Peroxidase, domain 2"/>
    <property type="match status" value="2"/>
</dbReference>
<dbReference type="HAMAP" id="MF_01961">
    <property type="entry name" value="Catal_peroxid"/>
    <property type="match status" value="1"/>
</dbReference>
<dbReference type="InterPro" id="IPR000763">
    <property type="entry name" value="Catalase_peroxidase"/>
</dbReference>
<dbReference type="InterPro" id="IPR002016">
    <property type="entry name" value="Haem_peroxidase"/>
</dbReference>
<dbReference type="InterPro" id="IPR010255">
    <property type="entry name" value="Haem_peroxidase_sf"/>
</dbReference>
<dbReference type="InterPro" id="IPR019794">
    <property type="entry name" value="Peroxidases_AS"/>
</dbReference>
<dbReference type="InterPro" id="IPR019793">
    <property type="entry name" value="Peroxidases_heam-ligand_BS"/>
</dbReference>
<dbReference type="NCBIfam" id="TIGR00198">
    <property type="entry name" value="cat_per_HPI"/>
    <property type="match status" value="1"/>
</dbReference>
<dbReference type="NCBIfam" id="NF011635">
    <property type="entry name" value="PRK15061.1"/>
    <property type="match status" value="1"/>
</dbReference>
<dbReference type="PANTHER" id="PTHR30555:SF0">
    <property type="entry name" value="CATALASE-PEROXIDASE"/>
    <property type="match status" value="1"/>
</dbReference>
<dbReference type="PANTHER" id="PTHR30555">
    <property type="entry name" value="HYDROPEROXIDASE I, BIFUNCTIONAL CATALASE-PEROXIDASE"/>
    <property type="match status" value="1"/>
</dbReference>
<dbReference type="Pfam" id="PF00141">
    <property type="entry name" value="peroxidase"/>
    <property type="match status" value="2"/>
</dbReference>
<dbReference type="PRINTS" id="PR00460">
    <property type="entry name" value="BPEROXIDASE"/>
</dbReference>
<dbReference type="PRINTS" id="PR00458">
    <property type="entry name" value="PEROXIDASE"/>
</dbReference>
<dbReference type="SUPFAM" id="SSF48113">
    <property type="entry name" value="Heme-dependent peroxidases"/>
    <property type="match status" value="2"/>
</dbReference>
<dbReference type="PROSITE" id="PS00435">
    <property type="entry name" value="PEROXIDASE_1"/>
    <property type="match status" value="1"/>
</dbReference>
<dbReference type="PROSITE" id="PS00436">
    <property type="entry name" value="PEROXIDASE_2"/>
    <property type="match status" value="1"/>
</dbReference>
<dbReference type="PROSITE" id="PS50873">
    <property type="entry name" value="PEROXIDASE_4"/>
    <property type="match status" value="1"/>
</dbReference>
<name>KATG_TRIL1</name>
<gene>
    <name evidence="1" type="primary">katG</name>
    <name type="ordered locus">Glov_1795</name>
</gene>
<proteinExistence type="inferred from homology"/>
<organism>
    <name type="scientific">Trichlorobacter lovleyi (strain ATCC BAA-1151 / DSM 17278 / SZ)</name>
    <name type="common">Geobacter lovleyi</name>
    <dbReference type="NCBI Taxonomy" id="398767"/>
    <lineage>
        <taxon>Bacteria</taxon>
        <taxon>Pseudomonadati</taxon>
        <taxon>Thermodesulfobacteriota</taxon>
        <taxon>Desulfuromonadia</taxon>
        <taxon>Geobacterales</taxon>
        <taxon>Geobacteraceae</taxon>
        <taxon>Trichlorobacter</taxon>
    </lineage>
</organism>
<keyword id="KW-0349">Heme</keyword>
<keyword id="KW-0376">Hydrogen peroxide</keyword>
<keyword id="KW-0408">Iron</keyword>
<keyword id="KW-0479">Metal-binding</keyword>
<keyword id="KW-0560">Oxidoreductase</keyword>
<keyword id="KW-0575">Peroxidase</keyword>
<keyword id="KW-1185">Reference proteome</keyword>
<accession>B3EBB7</accession>
<protein>
    <recommendedName>
        <fullName evidence="1">Catalase-peroxidase</fullName>
        <shortName evidence="1">CP</shortName>
        <ecNumber evidence="1">1.11.1.21</ecNumber>
    </recommendedName>
    <alternativeName>
        <fullName evidence="1">Peroxidase/catalase</fullName>
    </alternativeName>
</protein>
<reference key="1">
    <citation type="submission" date="2008-05" db="EMBL/GenBank/DDBJ databases">
        <title>Complete sequence of chromosome of Geobacter lovleyi SZ.</title>
        <authorList>
            <consortium name="US DOE Joint Genome Institute"/>
            <person name="Lucas S."/>
            <person name="Copeland A."/>
            <person name="Lapidus A."/>
            <person name="Glavina del Rio T."/>
            <person name="Dalin E."/>
            <person name="Tice H."/>
            <person name="Bruce D."/>
            <person name="Goodwin L."/>
            <person name="Pitluck S."/>
            <person name="Chertkov O."/>
            <person name="Meincke L."/>
            <person name="Brettin T."/>
            <person name="Detter J.C."/>
            <person name="Han C."/>
            <person name="Tapia R."/>
            <person name="Kuske C.R."/>
            <person name="Schmutz J."/>
            <person name="Larimer F."/>
            <person name="Land M."/>
            <person name="Hauser L."/>
            <person name="Kyrpides N."/>
            <person name="Mikhailova N."/>
            <person name="Sung Y."/>
            <person name="Fletcher K.E."/>
            <person name="Ritalahti K.M."/>
            <person name="Loeffler F.E."/>
            <person name="Richardson P."/>
        </authorList>
    </citation>
    <scope>NUCLEOTIDE SEQUENCE [LARGE SCALE GENOMIC DNA]</scope>
    <source>
        <strain>ATCC BAA-1151 / DSM 17278 / SZ</strain>
    </source>
</reference>